<gene>
    <name type="primary">CDC42SE2</name>
    <name type="synonym">SPEC2</name>
</gene>
<organism>
    <name type="scientific">Homo sapiens</name>
    <name type="common">Human</name>
    <dbReference type="NCBI Taxonomy" id="9606"/>
    <lineage>
        <taxon>Eukaryota</taxon>
        <taxon>Metazoa</taxon>
        <taxon>Chordata</taxon>
        <taxon>Craniata</taxon>
        <taxon>Vertebrata</taxon>
        <taxon>Euteleostomi</taxon>
        <taxon>Mammalia</taxon>
        <taxon>Eutheria</taxon>
        <taxon>Euarchontoglires</taxon>
        <taxon>Primates</taxon>
        <taxon>Haplorrhini</taxon>
        <taxon>Catarrhini</taxon>
        <taxon>Hominidae</taxon>
        <taxon>Homo</taxon>
    </lineage>
</organism>
<comment type="function">
    <text evidence="3 4">Probably involved in the organization of the actin cytoskeleton by acting downstream of CDC42, inducing actin filament assembly. Alters CDC42-induced cell shape changes. In activated T-cells, may play a role in CDC42-mediated F-actin accumulation at the immunological synapse. May play a role in early contractile events in phagocytosis in macrophages.</text>
</comment>
<comment type="subunit">
    <text evidence="3">Interacts with CDC42 (in GTP-bound form). Interacts weakly with RAC1 and not at all with RHOA.</text>
</comment>
<comment type="subcellular location">
    <subcellularLocation>
        <location>Cytoplasm</location>
        <location>Cytoskeleton</location>
    </subcellularLocation>
    <subcellularLocation>
        <location>Cell membrane</location>
        <topology>Lipid-anchor</topology>
    </subcellularLocation>
    <subcellularLocation>
        <location>Cell projection</location>
        <location>Phagocytic cup</location>
    </subcellularLocation>
    <text>Recruited to the activated TCR prior actin polymerization. Localizes at the phagocytic cup of macrophages.</text>
</comment>
<comment type="tissue specificity">
    <text evidence="4">Widely expressed. Expressed at higher level in T-lymphocytes. Highly expressed in CCRF-CEM T-lymphocytes, Jurkat T-lymphocytes, and Raji B-lymphocytes compared (at protein level).</text>
</comment>
<comment type="domain">
    <text>The CRIB domain mediates interaction with CDC42.</text>
</comment>
<comment type="miscellaneous">
    <text>CDC42SE2 is mapped in the genomic region associated with schizophrenia.</text>
</comment>
<comment type="similarity">
    <text evidence="5">Belongs to the CDC42SE/SPEC family.</text>
</comment>
<name>C42S2_HUMAN</name>
<feature type="chain" id="PRO_0000334639" description="CDC42 small effector protein 2">
    <location>
        <begin position="1"/>
        <end position="84"/>
    </location>
</feature>
<feature type="domain" description="CRIB" evidence="2">
    <location>
        <begin position="29"/>
        <end position="42"/>
    </location>
</feature>
<feature type="modified residue" description="Phosphoserine" evidence="1">
    <location>
        <position position="43"/>
    </location>
</feature>
<feature type="modified residue" description="Phosphoserine" evidence="1">
    <location>
        <position position="52"/>
    </location>
</feature>
<feature type="lipid moiety-binding region" description="S-palmitoyl cysteine" evidence="4">
    <location>
        <position position="10"/>
    </location>
</feature>
<feature type="lipid moiety-binding region" description="S-palmitoyl cysteine" evidence="4">
    <location>
        <position position="11"/>
    </location>
</feature>
<evidence type="ECO:0000250" key="1">
    <source>
        <dbReference type="UniProtKB" id="Q8BGH7"/>
    </source>
</evidence>
<evidence type="ECO:0000255" key="2">
    <source>
        <dbReference type="PROSITE-ProRule" id="PRU00057"/>
    </source>
</evidence>
<evidence type="ECO:0000269" key="3">
    <source>
    </source>
</evidence>
<evidence type="ECO:0000269" key="4">
    <source>
    </source>
</evidence>
<evidence type="ECO:0000305" key="5"/>
<keyword id="KW-1003">Cell membrane</keyword>
<keyword id="KW-0966">Cell projection</keyword>
<keyword id="KW-0133">Cell shape</keyword>
<keyword id="KW-0963">Cytoplasm</keyword>
<keyword id="KW-0206">Cytoskeleton</keyword>
<keyword id="KW-0449">Lipoprotein</keyword>
<keyword id="KW-0472">Membrane</keyword>
<keyword id="KW-0564">Palmitate</keyword>
<keyword id="KW-0581">Phagocytosis</keyword>
<keyword id="KW-0597">Phosphoprotein</keyword>
<keyword id="KW-1267">Proteomics identification</keyword>
<keyword id="KW-1185">Reference proteome</keyword>
<reference key="1">
    <citation type="journal article" date="2000" name="J. Biol. Chem.">
        <title>SPECs, small binding proteins for Cdc42.</title>
        <authorList>
            <person name="Pirone D.M."/>
            <person name="Fukuhara S."/>
            <person name="Gutkind J.S."/>
            <person name="Burbelo P.D."/>
        </authorList>
    </citation>
    <scope>NUCLEOTIDE SEQUENCE [MRNA]</scope>
    <scope>FUNCTION</scope>
    <scope>SUBCELLULAR LOCATION</scope>
    <scope>INTERACTION WITH CDC42</scope>
</reference>
<reference key="2">
    <citation type="journal article" date="2004" name="Nat. Genet.">
        <title>Complete sequencing and characterization of 21,243 full-length human cDNAs.</title>
        <authorList>
            <person name="Ota T."/>
            <person name="Suzuki Y."/>
            <person name="Nishikawa T."/>
            <person name="Otsuki T."/>
            <person name="Sugiyama T."/>
            <person name="Irie R."/>
            <person name="Wakamatsu A."/>
            <person name="Hayashi K."/>
            <person name="Sato H."/>
            <person name="Nagai K."/>
            <person name="Kimura K."/>
            <person name="Makita H."/>
            <person name="Sekine M."/>
            <person name="Obayashi M."/>
            <person name="Nishi T."/>
            <person name="Shibahara T."/>
            <person name="Tanaka T."/>
            <person name="Ishii S."/>
            <person name="Yamamoto J."/>
            <person name="Saito K."/>
            <person name="Kawai Y."/>
            <person name="Isono Y."/>
            <person name="Nakamura Y."/>
            <person name="Nagahari K."/>
            <person name="Murakami K."/>
            <person name="Yasuda T."/>
            <person name="Iwayanagi T."/>
            <person name="Wagatsuma M."/>
            <person name="Shiratori A."/>
            <person name="Sudo H."/>
            <person name="Hosoiri T."/>
            <person name="Kaku Y."/>
            <person name="Kodaira H."/>
            <person name="Kondo H."/>
            <person name="Sugawara M."/>
            <person name="Takahashi M."/>
            <person name="Kanda K."/>
            <person name="Yokoi T."/>
            <person name="Furuya T."/>
            <person name="Kikkawa E."/>
            <person name="Omura Y."/>
            <person name="Abe K."/>
            <person name="Kamihara K."/>
            <person name="Katsuta N."/>
            <person name="Sato K."/>
            <person name="Tanikawa M."/>
            <person name="Yamazaki M."/>
            <person name="Ninomiya K."/>
            <person name="Ishibashi T."/>
            <person name="Yamashita H."/>
            <person name="Murakawa K."/>
            <person name="Fujimori K."/>
            <person name="Tanai H."/>
            <person name="Kimata M."/>
            <person name="Watanabe M."/>
            <person name="Hiraoka S."/>
            <person name="Chiba Y."/>
            <person name="Ishida S."/>
            <person name="Ono Y."/>
            <person name="Takiguchi S."/>
            <person name="Watanabe S."/>
            <person name="Yosida M."/>
            <person name="Hotuta T."/>
            <person name="Kusano J."/>
            <person name="Kanehori K."/>
            <person name="Takahashi-Fujii A."/>
            <person name="Hara H."/>
            <person name="Tanase T.-O."/>
            <person name="Nomura Y."/>
            <person name="Togiya S."/>
            <person name="Komai F."/>
            <person name="Hara R."/>
            <person name="Takeuchi K."/>
            <person name="Arita M."/>
            <person name="Imose N."/>
            <person name="Musashino K."/>
            <person name="Yuuki H."/>
            <person name="Oshima A."/>
            <person name="Sasaki N."/>
            <person name="Aotsuka S."/>
            <person name="Yoshikawa Y."/>
            <person name="Matsunawa H."/>
            <person name="Ichihara T."/>
            <person name="Shiohata N."/>
            <person name="Sano S."/>
            <person name="Moriya S."/>
            <person name="Momiyama H."/>
            <person name="Satoh N."/>
            <person name="Takami S."/>
            <person name="Terashima Y."/>
            <person name="Suzuki O."/>
            <person name="Nakagawa S."/>
            <person name="Senoh A."/>
            <person name="Mizoguchi H."/>
            <person name="Goto Y."/>
            <person name="Shimizu F."/>
            <person name="Wakebe H."/>
            <person name="Hishigaki H."/>
            <person name="Watanabe T."/>
            <person name="Sugiyama A."/>
            <person name="Takemoto M."/>
            <person name="Kawakami B."/>
            <person name="Yamazaki M."/>
            <person name="Watanabe K."/>
            <person name="Kumagai A."/>
            <person name="Itakura S."/>
            <person name="Fukuzumi Y."/>
            <person name="Fujimori Y."/>
            <person name="Komiyama M."/>
            <person name="Tashiro H."/>
            <person name="Tanigami A."/>
            <person name="Fujiwara T."/>
            <person name="Ono T."/>
            <person name="Yamada K."/>
            <person name="Fujii Y."/>
            <person name="Ozaki K."/>
            <person name="Hirao M."/>
            <person name="Ohmori Y."/>
            <person name="Kawabata A."/>
            <person name="Hikiji T."/>
            <person name="Kobatake N."/>
            <person name="Inagaki H."/>
            <person name="Ikema Y."/>
            <person name="Okamoto S."/>
            <person name="Okitani R."/>
            <person name="Kawakami T."/>
            <person name="Noguchi S."/>
            <person name="Itoh T."/>
            <person name="Shigeta K."/>
            <person name="Senba T."/>
            <person name="Matsumura K."/>
            <person name="Nakajima Y."/>
            <person name="Mizuno T."/>
            <person name="Morinaga M."/>
            <person name="Sasaki M."/>
            <person name="Togashi T."/>
            <person name="Oyama M."/>
            <person name="Hata H."/>
            <person name="Watanabe M."/>
            <person name="Komatsu T."/>
            <person name="Mizushima-Sugano J."/>
            <person name="Satoh T."/>
            <person name="Shirai Y."/>
            <person name="Takahashi Y."/>
            <person name="Nakagawa K."/>
            <person name="Okumura K."/>
            <person name="Nagase T."/>
            <person name="Nomura N."/>
            <person name="Kikuchi H."/>
            <person name="Masuho Y."/>
            <person name="Yamashita R."/>
            <person name="Nakai K."/>
            <person name="Yada T."/>
            <person name="Nakamura Y."/>
            <person name="Ohara O."/>
            <person name="Isogai T."/>
            <person name="Sugano S."/>
        </authorList>
    </citation>
    <scope>NUCLEOTIDE SEQUENCE [LARGE SCALE MRNA]</scope>
    <source>
        <tissue>Brain</tissue>
    </source>
</reference>
<reference key="3">
    <citation type="submission" date="2005-09" db="EMBL/GenBank/DDBJ databases">
        <authorList>
            <person name="Mural R.J."/>
            <person name="Istrail S."/>
            <person name="Sutton G.G."/>
            <person name="Florea L."/>
            <person name="Halpern A.L."/>
            <person name="Mobarry C.M."/>
            <person name="Lippert R."/>
            <person name="Walenz B."/>
            <person name="Shatkay H."/>
            <person name="Dew I."/>
            <person name="Miller J.R."/>
            <person name="Flanigan M.J."/>
            <person name="Edwards N.J."/>
            <person name="Bolanos R."/>
            <person name="Fasulo D."/>
            <person name="Halldorsson B.V."/>
            <person name="Hannenhalli S."/>
            <person name="Turner R."/>
            <person name="Yooseph S."/>
            <person name="Lu F."/>
            <person name="Nusskern D.R."/>
            <person name="Shue B.C."/>
            <person name="Zheng X.H."/>
            <person name="Zhong F."/>
            <person name="Delcher A.L."/>
            <person name="Huson D.H."/>
            <person name="Kravitz S.A."/>
            <person name="Mouchard L."/>
            <person name="Reinert K."/>
            <person name="Remington K.A."/>
            <person name="Clark A.G."/>
            <person name="Waterman M.S."/>
            <person name="Eichler E.E."/>
            <person name="Adams M.D."/>
            <person name="Hunkapiller M.W."/>
            <person name="Myers E.W."/>
            <person name="Venter J.C."/>
        </authorList>
    </citation>
    <scope>NUCLEOTIDE SEQUENCE [LARGE SCALE GENOMIC DNA]</scope>
</reference>
<reference key="4">
    <citation type="journal article" date="2004" name="Genome Res.">
        <title>The status, quality, and expansion of the NIH full-length cDNA project: the Mammalian Gene Collection (MGC).</title>
        <authorList>
            <consortium name="The MGC Project Team"/>
        </authorList>
    </citation>
    <scope>NUCLEOTIDE SEQUENCE [LARGE SCALE MRNA]</scope>
</reference>
<reference key="5">
    <citation type="journal article" date="2005" name="J. Biol. Chem.">
        <title>The role of SPECs, small Cdc42-binding proteins, in F-actin accumulation at the immunological synapse.</title>
        <authorList>
            <person name="Ching K.H."/>
            <person name="Kisailus A.E."/>
            <person name="Burbelo P.D."/>
        </authorList>
    </citation>
    <scope>FUNCTION</scope>
    <scope>SUBCELLULAR LOCATION</scope>
    <scope>TISSUE SPECIFICITY</scope>
    <scope>PALMITOYLATION AT CYS-10 AND CYS-11</scope>
</reference>
<reference key="6">
    <citation type="journal article" date="2007" name="Exp. Cell Res.">
        <title>Biochemical characterization of distinct regions of SPEC molecules and their role in phagocytosis.</title>
        <authorList>
            <person name="Ching K.H."/>
            <person name="Kisailus A.E."/>
            <person name="Burbelo P.D."/>
        </authorList>
    </citation>
    <scope>SUBCELLULAR LOCATION</scope>
</reference>
<reference key="7">
    <citation type="journal article" date="2006" name="Hum. Mol. Genet.">
        <title>Haplotypes spanning SPEC2, PDZ-GEF2 and ACSL6 genes are associated with schizophrenia.</title>
        <authorList>
            <person name="Chen X."/>
            <person name="Wang X."/>
            <person name="Hossain S."/>
            <person name="O'Neill F.A."/>
            <person name="Walsh D."/>
            <person name="Pless L."/>
            <person name="Chowdari K.V."/>
            <person name="Nimgaonkar V.L."/>
            <person name="Schwab S.G."/>
            <person name="Wildenauer D.B."/>
            <person name="Sullivan P.F."/>
            <person name="van den Oord E."/>
            <person name="Kendler K.S."/>
        </authorList>
    </citation>
    <scope>POSSIBLE SUSCEPTIBILITY TO SCHIZOPHRENIA</scope>
</reference>
<protein>
    <recommendedName>
        <fullName>CDC42 small effector protein 2</fullName>
    </recommendedName>
    <alternativeName>
        <fullName>Small effector of CDC42 protein 2</fullName>
    </alternativeName>
</protein>
<dbReference type="EMBL" id="AF189692">
    <property type="protein sequence ID" value="AAF87598.1"/>
    <property type="molecule type" value="mRNA"/>
</dbReference>
<dbReference type="EMBL" id="AK312406">
    <property type="protein sequence ID" value="BAG35319.1"/>
    <property type="molecule type" value="mRNA"/>
</dbReference>
<dbReference type="EMBL" id="CH471062">
    <property type="protein sequence ID" value="EAW62373.1"/>
    <property type="molecule type" value="Genomic_DNA"/>
</dbReference>
<dbReference type="EMBL" id="BC096703">
    <property type="protein sequence ID" value="AAH96703.1"/>
    <property type="molecule type" value="mRNA"/>
</dbReference>
<dbReference type="EMBL" id="BC096738">
    <property type="protein sequence ID" value="AAH96738.1"/>
    <property type="molecule type" value="mRNA"/>
</dbReference>
<dbReference type="EMBL" id="BC098349">
    <property type="protein sequence ID" value="AAH98349.1"/>
    <property type="molecule type" value="mRNA"/>
</dbReference>
<dbReference type="CCDS" id="CCDS34224.1"/>
<dbReference type="RefSeq" id="NP_001033791.1">
    <property type="nucleotide sequence ID" value="NM_001038702.2"/>
</dbReference>
<dbReference type="RefSeq" id="NP_001362562.1">
    <property type="nucleotide sequence ID" value="NM_001375633.1"/>
</dbReference>
<dbReference type="RefSeq" id="NP_001362563.1">
    <property type="nucleotide sequence ID" value="NM_001375634.1"/>
</dbReference>
<dbReference type="RefSeq" id="NP_001362564.1">
    <property type="nucleotide sequence ID" value="NM_001375635.1"/>
</dbReference>
<dbReference type="RefSeq" id="NP_064625.1">
    <property type="nucleotide sequence ID" value="NM_020240.3"/>
</dbReference>
<dbReference type="RefSeq" id="XP_016865137.1">
    <property type="nucleotide sequence ID" value="XM_017009648.1"/>
</dbReference>
<dbReference type="RefSeq" id="XP_016865138.1">
    <property type="nucleotide sequence ID" value="XM_017009649.1"/>
</dbReference>
<dbReference type="RefSeq" id="XP_047273348.1">
    <property type="nucleotide sequence ID" value="XM_047417392.1"/>
</dbReference>
<dbReference type="RefSeq" id="XP_047273349.1">
    <property type="nucleotide sequence ID" value="XM_047417393.1"/>
</dbReference>
<dbReference type="RefSeq" id="XP_047273350.1">
    <property type="nucleotide sequence ID" value="XM_047417394.1"/>
</dbReference>
<dbReference type="RefSeq" id="XP_047273352.1">
    <property type="nucleotide sequence ID" value="XM_047417396.1"/>
</dbReference>
<dbReference type="RefSeq" id="XP_047273353.1">
    <property type="nucleotide sequence ID" value="XM_047417397.1"/>
</dbReference>
<dbReference type="RefSeq" id="XP_047273354.1">
    <property type="nucleotide sequence ID" value="XM_047417398.1"/>
</dbReference>
<dbReference type="RefSeq" id="XP_054208917.1">
    <property type="nucleotide sequence ID" value="XM_054352942.1"/>
</dbReference>
<dbReference type="RefSeq" id="XP_054208918.1">
    <property type="nucleotide sequence ID" value="XM_054352943.1"/>
</dbReference>
<dbReference type="RefSeq" id="XP_054208919.1">
    <property type="nucleotide sequence ID" value="XM_054352944.1"/>
</dbReference>
<dbReference type="RefSeq" id="XP_054208920.1">
    <property type="nucleotide sequence ID" value="XM_054352945.1"/>
</dbReference>
<dbReference type="BioGRID" id="121306">
    <property type="interactions" value="53"/>
</dbReference>
<dbReference type="FunCoup" id="Q9NRR3">
    <property type="interactions" value="1209"/>
</dbReference>
<dbReference type="IntAct" id="Q9NRR3">
    <property type="interactions" value="9"/>
</dbReference>
<dbReference type="STRING" id="9606.ENSP00000427421"/>
<dbReference type="iPTMnet" id="Q9NRR3"/>
<dbReference type="PhosphoSitePlus" id="Q9NRR3"/>
<dbReference type="SwissPalm" id="Q9NRR3"/>
<dbReference type="BioMuta" id="CDC42SE2"/>
<dbReference type="DMDM" id="74719133"/>
<dbReference type="jPOST" id="Q9NRR3"/>
<dbReference type="MassIVE" id="Q9NRR3"/>
<dbReference type="PaxDb" id="9606-ENSP00000427421"/>
<dbReference type="PeptideAtlas" id="Q9NRR3"/>
<dbReference type="ProteomicsDB" id="82408"/>
<dbReference type="Pumba" id="Q9NRR3"/>
<dbReference type="TopDownProteomics" id="Q9NRR3"/>
<dbReference type="Antibodypedia" id="25863">
    <property type="antibodies" value="102 antibodies from 14 providers"/>
</dbReference>
<dbReference type="DNASU" id="56990"/>
<dbReference type="Ensembl" id="ENST00000360515.7">
    <property type="protein sequence ID" value="ENSP00000353706.3"/>
    <property type="gene ID" value="ENSG00000158985.14"/>
</dbReference>
<dbReference type="Ensembl" id="ENST00000395246.5">
    <property type="protein sequence ID" value="ENSP00000378667.1"/>
    <property type="gene ID" value="ENSG00000158985.14"/>
</dbReference>
<dbReference type="Ensembl" id="ENST00000505065.2">
    <property type="protein sequence ID" value="ENSP00000427421.1"/>
    <property type="gene ID" value="ENSG00000158985.14"/>
</dbReference>
<dbReference type="GeneID" id="56990"/>
<dbReference type="KEGG" id="hsa:56990"/>
<dbReference type="MANE-Select" id="ENST00000505065.2">
    <property type="protein sequence ID" value="ENSP00000427421.1"/>
    <property type="RefSeq nucleotide sequence ID" value="NM_001375635.1"/>
    <property type="RefSeq protein sequence ID" value="NP_001362564.1"/>
</dbReference>
<dbReference type="UCSC" id="uc003kvh.4">
    <property type="organism name" value="human"/>
</dbReference>
<dbReference type="AGR" id="HGNC:18547"/>
<dbReference type="CTD" id="56990"/>
<dbReference type="DisGeNET" id="56990"/>
<dbReference type="GeneCards" id="CDC42SE2"/>
<dbReference type="HGNC" id="HGNC:18547">
    <property type="gene designation" value="CDC42SE2"/>
</dbReference>
<dbReference type="HPA" id="ENSG00000158985">
    <property type="expression patterns" value="Low tissue specificity"/>
</dbReference>
<dbReference type="MIM" id="619457">
    <property type="type" value="gene"/>
</dbReference>
<dbReference type="neXtProt" id="NX_Q9NRR3"/>
<dbReference type="OpenTargets" id="ENSG00000158985"/>
<dbReference type="PharmGKB" id="PA133787056"/>
<dbReference type="VEuPathDB" id="HostDB:ENSG00000158985"/>
<dbReference type="eggNOG" id="ENOG502S22R">
    <property type="taxonomic scope" value="Eukaryota"/>
</dbReference>
<dbReference type="GeneTree" id="ENSGT00940000158245"/>
<dbReference type="HOGENOM" id="CLU_173417_1_0_1"/>
<dbReference type="InParanoid" id="Q9NRR3"/>
<dbReference type="OMA" id="CCIGGQP"/>
<dbReference type="OrthoDB" id="5559822at2759"/>
<dbReference type="PAN-GO" id="Q9NRR3">
    <property type="GO annotations" value="1 GO annotation based on evolutionary models"/>
</dbReference>
<dbReference type="PhylomeDB" id="Q9NRR3"/>
<dbReference type="TreeFam" id="TF323815"/>
<dbReference type="PathwayCommons" id="Q9NRR3"/>
<dbReference type="Reactome" id="R-HSA-9013148">
    <property type="pathway name" value="CDC42 GTPase cycle"/>
</dbReference>
<dbReference type="SignaLink" id="Q9NRR3"/>
<dbReference type="BioGRID-ORCS" id="56990">
    <property type="hits" value="10 hits in 1159 CRISPR screens"/>
</dbReference>
<dbReference type="ChiTaRS" id="CDC42SE2">
    <property type="organism name" value="human"/>
</dbReference>
<dbReference type="GenomeRNAi" id="56990"/>
<dbReference type="Pharos" id="Q9NRR3">
    <property type="development level" value="Tbio"/>
</dbReference>
<dbReference type="PRO" id="PR:Q9NRR3"/>
<dbReference type="Proteomes" id="UP000005640">
    <property type="component" value="Chromosome 5"/>
</dbReference>
<dbReference type="RNAct" id="Q9NRR3">
    <property type="molecule type" value="protein"/>
</dbReference>
<dbReference type="Bgee" id="ENSG00000158985">
    <property type="expression patterns" value="Expressed in ileal mucosa and 195 other cell types or tissues"/>
</dbReference>
<dbReference type="ExpressionAtlas" id="Q9NRR3">
    <property type="expression patterns" value="baseline and differential"/>
</dbReference>
<dbReference type="GO" id="GO:0042995">
    <property type="term" value="C:cell projection"/>
    <property type="evidence" value="ECO:0007669"/>
    <property type="project" value="UniProtKB-KW"/>
</dbReference>
<dbReference type="GO" id="GO:0005737">
    <property type="term" value="C:cytoplasm"/>
    <property type="evidence" value="ECO:0007669"/>
    <property type="project" value="UniProtKB-KW"/>
</dbReference>
<dbReference type="GO" id="GO:0005856">
    <property type="term" value="C:cytoskeleton"/>
    <property type="evidence" value="ECO:0007669"/>
    <property type="project" value="UniProtKB-SubCell"/>
</dbReference>
<dbReference type="GO" id="GO:0001891">
    <property type="term" value="C:phagocytic cup"/>
    <property type="evidence" value="ECO:0007669"/>
    <property type="project" value="UniProtKB-SubCell"/>
</dbReference>
<dbReference type="GO" id="GO:0005886">
    <property type="term" value="C:plasma membrane"/>
    <property type="evidence" value="ECO:0000314"/>
    <property type="project" value="UniProtKB"/>
</dbReference>
<dbReference type="GO" id="GO:0035591">
    <property type="term" value="F:signaling adaptor activity"/>
    <property type="evidence" value="ECO:0000314"/>
    <property type="project" value="UniProtKB"/>
</dbReference>
<dbReference type="GO" id="GO:0031267">
    <property type="term" value="F:small GTPase binding"/>
    <property type="evidence" value="ECO:0007669"/>
    <property type="project" value="InterPro"/>
</dbReference>
<dbReference type="GO" id="GO:0006909">
    <property type="term" value="P:phagocytosis"/>
    <property type="evidence" value="ECO:0007669"/>
    <property type="project" value="UniProtKB-KW"/>
</dbReference>
<dbReference type="GO" id="GO:0008360">
    <property type="term" value="P:regulation of cell shape"/>
    <property type="evidence" value="ECO:0007669"/>
    <property type="project" value="UniProtKB-KW"/>
</dbReference>
<dbReference type="GO" id="GO:0035023">
    <property type="term" value="P:regulation of Rho protein signal transduction"/>
    <property type="evidence" value="ECO:0007669"/>
    <property type="project" value="InterPro"/>
</dbReference>
<dbReference type="GO" id="GO:0009966">
    <property type="term" value="P:regulation of signal transduction"/>
    <property type="evidence" value="ECO:0000314"/>
    <property type="project" value="UniProtKB"/>
</dbReference>
<dbReference type="CDD" id="cd00132">
    <property type="entry name" value="CRIB"/>
    <property type="match status" value="1"/>
</dbReference>
<dbReference type="FunFam" id="3.90.810.10:FF:000004">
    <property type="entry name" value="CDC42 small effector protein 2"/>
    <property type="match status" value="1"/>
</dbReference>
<dbReference type="Gene3D" id="3.90.810.10">
    <property type="entry name" value="CRIB domain"/>
    <property type="match status" value="1"/>
</dbReference>
<dbReference type="InterPro" id="IPR000095">
    <property type="entry name" value="CRIB_dom"/>
</dbReference>
<dbReference type="InterPro" id="IPR036936">
    <property type="entry name" value="CRIB_dom_sf"/>
</dbReference>
<dbReference type="InterPro" id="IPR039056">
    <property type="entry name" value="SPEC"/>
</dbReference>
<dbReference type="PANTHER" id="PTHR13502:SF4">
    <property type="entry name" value="CDC42 SMALL EFFECTOR PROTEIN 2"/>
    <property type="match status" value="1"/>
</dbReference>
<dbReference type="PANTHER" id="PTHR13502">
    <property type="entry name" value="CDC42 SMALL EFFECTOR PROTEIN HOMOLOG"/>
    <property type="match status" value="1"/>
</dbReference>
<dbReference type="Pfam" id="PF00786">
    <property type="entry name" value="PBD"/>
    <property type="match status" value="1"/>
</dbReference>
<dbReference type="PROSITE" id="PS50108">
    <property type="entry name" value="CRIB"/>
    <property type="match status" value="1"/>
</dbReference>
<accession>Q9NRR3</accession>
<accession>B2R622</accession>
<accession>Q4KMT9</accession>
<proteinExistence type="evidence at protein level"/>
<sequence length="84" mass="9223">MSEFWLCFNCCIAEQPQPKRRRRIDRSMIGEPTNFVHTAHVGSGDLFSGMNSVSSIQNQMQSKGGYGGGMPANVQMQLVDTKAG</sequence>